<sequence>MSPQKRVKNVQAQNRTSQGSSSFQTTLSAWKVKQDPSNSKNISKHGQNNPVGDYEHADDQAEEDALQMAVGYFEKGPIKASQNKDKTLEKHLKTVENVAWKNGLASEEIDILLNIALSGKFGNAVNTRILKCMIPATVISEDSVVKAVSWLCVGKCSGSTKVLFYRWLVAMFDFIDRKEQINLLYGFFFASLQDDALCPYVCHLLYLLTKKENVKPFRVRKLLDLQAKMGMQPHLQALLSLYKFFAPALISVSLPVRKKIYFKNSENLWKTALLAVKQRNRGPSPEPLKLMLGPANVRPLKRKWNSLSVIPVLNSSSYTKECGKKEMSLSDCLNRSGSFPLEQLQSFPQLLQNIHCLELPSQMGSVLNNSLLLHYINCVRDEPVLLRFYYWLSQTLQEECIWYKVNNYEHGKEFTNFLDTIIRAECFLQEGFYSCEAFLYKSLPLWDGLCCRSQFLQLVSWIPFSSFSEVKPLLFDHLAQLFFTSTIYFKCSVLQSLKELLQNWLLWLSMDIHMKPVTNSPLETTLGGSMNSVSKLIHYVGWLSTTAMRLESNNTFLLHFILDFYEKVCDIYINYNLPLVVLFPPGIFYSALLSLDTSILNQLCFIMHRYRKNLTAAKKNELVQKTKSEFNFSSKTYQEFNHYLTSMVGCLWTSKPFGKGIYIDPEILEKTGVAEYKNSLNVVHHPSFLSYAVSFLLQESPEERTVNVSSIRGKKWSWYLDYLFSQGLQGLKLFIRSSVHHSSIPRAEGINCNNQY</sequence>
<reference key="1">
    <citation type="journal article" date="1996" name="Genomics">
        <title>Sequence and chromosomal location of a human homologue of LRPR1, an FSH primary response gene.</title>
        <authorList>
            <person name="Roberts R.G."/>
            <person name="Kendall E."/>
            <person name="Vetrie D."/>
            <person name="Bobrow M."/>
        </authorList>
    </citation>
    <scope>NUCLEOTIDE SEQUENCE [MRNA] (ISOFORM 1)</scope>
</reference>
<reference key="2">
    <citation type="journal article" date="2005" name="Nature">
        <title>The DNA sequence of the human X chromosome.</title>
        <authorList>
            <person name="Ross M.T."/>
            <person name="Grafham D.V."/>
            <person name="Coffey A.J."/>
            <person name="Scherer S."/>
            <person name="McLay K."/>
            <person name="Muzny D."/>
            <person name="Platzer M."/>
            <person name="Howell G.R."/>
            <person name="Burrows C."/>
            <person name="Bird C.P."/>
            <person name="Frankish A."/>
            <person name="Lovell F.L."/>
            <person name="Howe K.L."/>
            <person name="Ashurst J.L."/>
            <person name="Fulton R.S."/>
            <person name="Sudbrak R."/>
            <person name="Wen G."/>
            <person name="Jones M.C."/>
            <person name="Hurles M.E."/>
            <person name="Andrews T.D."/>
            <person name="Scott C.E."/>
            <person name="Searle S."/>
            <person name="Ramser J."/>
            <person name="Whittaker A."/>
            <person name="Deadman R."/>
            <person name="Carter N.P."/>
            <person name="Hunt S.E."/>
            <person name="Chen R."/>
            <person name="Cree A."/>
            <person name="Gunaratne P."/>
            <person name="Havlak P."/>
            <person name="Hodgson A."/>
            <person name="Metzker M.L."/>
            <person name="Richards S."/>
            <person name="Scott G."/>
            <person name="Steffen D."/>
            <person name="Sodergren E."/>
            <person name="Wheeler D.A."/>
            <person name="Worley K.C."/>
            <person name="Ainscough R."/>
            <person name="Ambrose K.D."/>
            <person name="Ansari-Lari M.A."/>
            <person name="Aradhya S."/>
            <person name="Ashwell R.I."/>
            <person name="Babbage A.K."/>
            <person name="Bagguley C.L."/>
            <person name="Ballabio A."/>
            <person name="Banerjee R."/>
            <person name="Barker G.E."/>
            <person name="Barlow K.F."/>
            <person name="Barrett I.P."/>
            <person name="Bates K.N."/>
            <person name="Beare D.M."/>
            <person name="Beasley H."/>
            <person name="Beasley O."/>
            <person name="Beck A."/>
            <person name="Bethel G."/>
            <person name="Blechschmidt K."/>
            <person name="Brady N."/>
            <person name="Bray-Allen S."/>
            <person name="Bridgeman A.M."/>
            <person name="Brown A.J."/>
            <person name="Brown M.J."/>
            <person name="Bonnin D."/>
            <person name="Bruford E.A."/>
            <person name="Buhay C."/>
            <person name="Burch P."/>
            <person name="Burford D."/>
            <person name="Burgess J."/>
            <person name="Burrill W."/>
            <person name="Burton J."/>
            <person name="Bye J.M."/>
            <person name="Carder C."/>
            <person name="Carrel L."/>
            <person name="Chako J."/>
            <person name="Chapman J.C."/>
            <person name="Chavez D."/>
            <person name="Chen E."/>
            <person name="Chen G."/>
            <person name="Chen Y."/>
            <person name="Chen Z."/>
            <person name="Chinault C."/>
            <person name="Ciccodicola A."/>
            <person name="Clark S.Y."/>
            <person name="Clarke G."/>
            <person name="Clee C.M."/>
            <person name="Clegg S."/>
            <person name="Clerc-Blankenburg K."/>
            <person name="Clifford K."/>
            <person name="Cobley V."/>
            <person name="Cole C.G."/>
            <person name="Conquer J.S."/>
            <person name="Corby N."/>
            <person name="Connor R.E."/>
            <person name="David R."/>
            <person name="Davies J."/>
            <person name="Davis C."/>
            <person name="Davis J."/>
            <person name="Delgado O."/>
            <person name="Deshazo D."/>
            <person name="Dhami P."/>
            <person name="Ding Y."/>
            <person name="Dinh H."/>
            <person name="Dodsworth S."/>
            <person name="Draper H."/>
            <person name="Dugan-Rocha S."/>
            <person name="Dunham A."/>
            <person name="Dunn M."/>
            <person name="Durbin K.J."/>
            <person name="Dutta I."/>
            <person name="Eades T."/>
            <person name="Ellwood M."/>
            <person name="Emery-Cohen A."/>
            <person name="Errington H."/>
            <person name="Evans K.L."/>
            <person name="Faulkner L."/>
            <person name="Francis F."/>
            <person name="Frankland J."/>
            <person name="Fraser A.E."/>
            <person name="Galgoczy P."/>
            <person name="Gilbert J."/>
            <person name="Gill R."/>
            <person name="Gloeckner G."/>
            <person name="Gregory S.G."/>
            <person name="Gribble S."/>
            <person name="Griffiths C."/>
            <person name="Grocock R."/>
            <person name="Gu Y."/>
            <person name="Gwilliam R."/>
            <person name="Hamilton C."/>
            <person name="Hart E.A."/>
            <person name="Hawes A."/>
            <person name="Heath P.D."/>
            <person name="Heitmann K."/>
            <person name="Hennig S."/>
            <person name="Hernandez J."/>
            <person name="Hinzmann B."/>
            <person name="Ho S."/>
            <person name="Hoffs M."/>
            <person name="Howden P.J."/>
            <person name="Huckle E.J."/>
            <person name="Hume J."/>
            <person name="Hunt P.J."/>
            <person name="Hunt A.R."/>
            <person name="Isherwood J."/>
            <person name="Jacob L."/>
            <person name="Johnson D."/>
            <person name="Jones S."/>
            <person name="de Jong P.J."/>
            <person name="Joseph S.S."/>
            <person name="Keenan S."/>
            <person name="Kelly S."/>
            <person name="Kershaw J.K."/>
            <person name="Khan Z."/>
            <person name="Kioschis P."/>
            <person name="Klages S."/>
            <person name="Knights A.J."/>
            <person name="Kosiura A."/>
            <person name="Kovar-Smith C."/>
            <person name="Laird G.K."/>
            <person name="Langford C."/>
            <person name="Lawlor S."/>
            <person name="Leversha M."/>
            <person name="Lewis L."/>
            <person name="Liu W."/>
            <person name="Lloyd C."/>
            <person name="Lloyd D.M."/>
            <person name="Loulseged H."/>
            <person name="Loveland J.E."/>
            <person name="Lovell J.D."/>
            <person name="Lozado R."/>
            <person name="Lu J."/>
            <person name="Lyne R."/>
            <person name="Ma J."/>
            <person name="Maheshwari M."/>
            <person name="Matthews L.H."/>
            <person name="McDowall J."/>
            <person name="McLaren S."/>
            <person name="McMurray A."/>
            <person name="Meidl P."/>
            <person name="Meitinger T."/>
            <person name="Milne S."/>
            <person name="Miner G."/>
            <person name="Mistry S.L."/>
            <person name="Morgan M."/>
            <person name="Morris S."/>
            <person name="Mueller I."/>
            <person name="Mullikin J.C."/>
            <person name="Nguyen N."/>
            <person name="Nordsiek G."/>
            <person name="Nyakatura G."/>
            <person name="O'dell C.N."/>
            <person name="Okwuonu G."/>
            <person name="Palmer S."/>
            <person name="Pandian R."/>
            <person name="Parker D."/>
            <person name="Parrish J."/>
            <person name="Pasternak S."/>
            <person name="Patel D."/>
            <person name="Pearce A.V."/>
            <person name="Pearson D.M."/>
            <person name="Pelan S.E."/>
            <person name="Perez L."/>
            <person name="Porter K.M."/>
            <person name="Ramsey Y."/>
            <person name="Reichwald K."/>
            <person name="Rhodes S."/>
            <person name="Ridler K.A."/>
            <person name="Schlessinger D."/>
            <person name="Schueler M.G."/>
            <person name="Sehra H.K."/>
            <person name="Shaw-Smith C."/>
            <person name="Shen H."/>
            <person name="Sheridan E.M."/>
            <person name="Shownkeen R."/>
            <person name="Skuce C.D."/>
            <person name="Smith M.L."/>
            <person name="Sotheran E.C."/>
            <person name="Steingruber H.E."/>
            <person name="Steward C.A."/>
            <person name="Storey R."/>
            <person name="Swann R.M."/>
            <person name="Swarbreck D."/>
            <person name="Tabor P.E."/>
            <person name="Taudien S."/>
            <person name="Taylor T."/>
            <person name="Teague B."/>
            <person name="Thomas K."/>
            <person name="Thorpe A."/>
            <person name="Timms K."/>
            <person name="Tracey A."/>
            <person name="Trevanion S."/>
            <person name="Tromans A.C."/>
            <person name="d'Urso M."/>
            <person name="Verduzco D."/>
            <person name="Villasana D."/>
            <person name="Waldron L."/>
            <person name="Wall M."/>
            <person name="Wang Q."/>
            <person name="Warren J."/>
            <person name="Warry G.L."/>
            <person name="Wei X."/>
            <person name="West A."/>
            <person name="Whitehead S.L."/>
            <person name="Whiteley M.N."/>
            <person name="Wilkinson J.E."/>
            <person name="Willey D.L."/>
            <person name="Williams G."/>
            <person name="Williams L."/>
            <person name="Williamson A."/>
            <person name="Williamson H."/>
            <person name="Wilming L."/>
            <person name="Woodmansey R.L."/>
            <person name="Wray P.W."/>
            <person name="Yen J."/>
            <person name="Zhang J."/>
            <person name="Zhou J."/>
            <person name="Zoghbi H."/>
            <person name="Zorilla S."/>
            <person name="Buck D."/>
            <person name="Reinhardt R."/>
            <person name="Poustka A."/>
            <person name="Rosenthal A."/>
            <person name="Lehrach H."/>
            <person name="Meindl A."/>
            <person name="Minx P.J."/>
            <person name="Hillier L.W."/>
            <person name="Willard H.F."/>
            <person name="Wilson R.K."/>
            <person name="Waterston R.H."/>
            <person name="Rice C.M."/>
            <person name="Vaudin M."/>
            <person name="Coulson A."/>
            <person name="Nelson D.L."/>
            <person name="Weinstock G."/>
            <person name="Sulston J.E."/>
            <person name="Durbin R.M."/>
            <person name="Hubbard T."/>
            <person name="Gibbs R.A."/>
            <person name="Beck S."/>
            <person name="Rogers J."/>
            <person name="Bentley D.R."/>
        </authorList>
    </citation>
    <scope>NUCLEOTIDE SEQUENCE [LARGE SCALE GENOMIC DNA]</scope>
</reference>
<reference key="3">
    <citation type="journal article" date="2004" name="Genome Res.">
        <title>The status, quality, and expansion of the NIH full-length cDNA project: the Mammalian Gene Collection (MGC).</title>
        <authorList>
            <consortium name="The MGC Project Team"/>
        </authorList>
    </citation>
    <scope>NUCLEOTIDE SEQUENCE [LARGE SCALE MRNA] (ISOFORM 2)</scope>
    <source>
        <tissue>Testis</tissue>
    </source>
</reference>
<reference key="4">
    <citation type="journal article" date="2003" name="Nat. Cell Biol.">
        <title>Human CENP-I specifies localization of CENP-F, MAD1 and MAD2 to kinetochores and is essential for mitosis.</title>
        <authorList>
            <person name="Liu S.-T."/>
            <person name="Hittle J.C."/>
            <person name="Jablonski S.A."/>
            <person name="Campbell M.S."/>
            <person name="Yoda K."/>
            <person name="Yen T.J."/>
        </authorList>
    </citation>
    <scope>FUNCTION</scope>
    <scope>SUBCELLULAR LOCATION</scope>
</reference>
<reference key="5">
    <citation type="journal article" date="2006" name="Genes Cells">
        <title>Comprehensive analysis of the ICEN (Interphase Centromere Complex) components enriched in the CENP-A chromatin of human cells.</title>
        <authorList>
            <person name="Izuta H."/>
            <person name="Ikeno M."/>
            <person name="Suzuki N."/>
            <person name="Tomonaga T."/>
            <person name="Nozaki N."/>
            <person name="Obuse C."/>
            <person name="Kisu Y."/>
            <person name="Goshima N."/>
            <person name="Nomura F."/>
            <person name="Nomura N."/>
            <person name="Yoda K."/>
        </authorList>
    </citation>
    <scope>IDENTIFICATION BY MASS SPECTROMETRY</scope>
</reference>
<reference key="6">
    <citation type="journal article" date="2006" name="Nat. Cell Biol.">
        <title>The CENP-H-I complex is required for the efficient incorporation of newly synthesized CENP-A into centromeres.</title>
        <authorList>
            <person name="Okada M."/>
            <person name="Cheeseman I.M."/>
            <person name="Hori T."/>
            <person name="Okawa K."/>
            <person name="McLeod I.X."/>
            <person name="Yates J.R. III"/>
            <person name="Desai A."/>
            <person name="Fukagawa T."/>
        </authorList>
    </citation>
    <scope>IDENTIFICATION BY MASS SPECTROMETRY</scope>
    <scope>IDENTIFICATION IN A COMPLEX WITH CENPH; CENPK; CENPN; CENPO; CENPP; CENPQ; CENPR AND CENPU</scope>
    <scope>FUNCTION</scope>
    <scope>SUBCELLULAR LOCATION</scope>
</reference>
<reference key="7">
    <citation type="journal article" date="2006" name="Nat. Cell Biol.">
        <title>The human CENP-A centromeric nucleosome-associated complex.</title>
        <authorList>
            <person name="Foltz D.R."/>
            <person name="Jansen L.E.T."/>
            <person name="Black B.E."/>
            <person name="Bailey A.O."/>
            <person name="Yates J.R. III"/>
            <person name="Cleveland D.W."/>
        </authorList>
    </citation>
    <scope>IDENTIFICATION BY MASS SPECTROMETRY</scope>
    <scope>IDENTIFICATION IN THE CENPA-CAD COMPLEX WITH CENPK; CENPL; CENPO; CENPP; CENPQ; CENPR AND CENPS</scope>
</reference>
<reference key="8">
    <citation type="journal article" date="2009" name="Anal. Chem.">
        <title>Lys-N and trypsin cover complementary parts of the phosphoproteome in a refined SCX-based approach.</title>
        <authorList>
            <person name="Gauci S."/>
            <person name="Helbig A.O."/>
            <person name="Slijper M."/>
            <person name="Krijgsveld J."/>
            <person name="Heck A.J."/>
            <person name="Mohammed S."/>
        </authorList>
    </citation>
    <scope>IDENTIFICATION BY MASS SPECTROMETRY [LARGE SCALE ANALYSIS]</scope>
</reference>
<reference key="9">
    <citation type="journal article" date="2010" name="J. Cell Biol.">
        <title>The SUMO protease SENP6 is essential for inner kinetochore assembly.</title>
        <authorList>
            <person name="Mukhopadhyay D."/>
            <person name="Arnaoutov A."/>
            <person name="Dasso M."/>
        </authorList>
    </citation>
    <scope>SUMOYLATION</scope>
    <scope>UBIQUITINATION BY RNF4</scope>
    <scope>DESUMOYLATION BY SENP6</scope>
    <scope>INTERACTION WITH SENP6</scope>
</reference>
<name>CENPI_HUMAN</name>
<keyword id="KW-0002">3D-structure</keyword>
<keyword id="KW-0025">Alternative splicing</keyword>
<keyword id="KW-0137">Centromere</keyword>
<keyword id="KW-0158">Chromosome</keyword>
<keyword id="KW-0539">Nucleus</keyword>
<keyword id="KW-1267">Proteomics identification</keyword>
<keyword id="KW-1185">Reference proteome</keyword>
<keyword id="KW-0832">Ubl conjugation</keyword>
<proteinExistence type="evidence at protein level"/>
<feature type="chain" id="PRO_0000087354" description="Centromere protein I">
    <location>
        <begin position="1"/>
        <end position="756"/>
    </location>
</feature>
<feature type="region of interest" description="Disordered" evidence="1">
    <location>
        <begin position="1"/>
        <end position="60"/>
    </location>
</feature>
<feature type="compositionally biased region" description="Polar residues" evidence="1">
    <location>
        <begin position="10"/>
        <end position="28"/>
    </location>
</feature>
<feature type="compositionally biased region" description="Polar residues" evidence="1">
    <location>
        <begin position="35"/>
        <end position="50"/>
    </location>
</feature>
<feature type="splice variant" id="VSP_015797" description="In isoform 2." evidence="6">
    <location>
        <begin position="523"/>
        <end position="756"/>
    </location>
</feature>
<feature type="sequence conflict" description="In Ref. 1; CAA65884." evidence="7" ref="1">
    <original>FK</original>
    <variation>LQ</variation>
    <location>
        <begin position="262"/>
        <end position="263"/>
    </location>
</feature>
<feature type="sequence conflict" description="In Ref. 1; CAA65884." evidence="7" ref="1">
    <original>Y</original>
    <variation>H</variation>
    <location>
        <position position="389"/>
    </location>
</feature>
<feature type="sequence conflict" description="In Ref. 1; CAA65884." evidence="7" ref="1">
    <original>F</original>
    <variation>Y</variation>
    <location>
        <position position="432"/>
    </location>
</feature>
<feature type="sequence conflict" description="In Ref. 1; CAA65884." evidence="7" ref="1">
    <original>C</original>
    <variation>S</variation>
    <location>
        <position position="450"/>
    </location>
</feature>
<feature type="sequence conflict" description="In Ref. 1; CAA65884." evidence="7" ref="1">
    <original>S</original>
    <variation>C</variation>
    <location>
        <position position="532"/>
    </location>
</feature>
<feature type="sequence conflict" description="In Ref. 1; CAA65884." evidence="7" ref="1">
    <original>N</original>
    <variation>D</variation>
    <location>
        <position position="576"/>
    </location>
</feature>
<feature type="sequence conflict" description="In Ref. 1; CAA65884." evidence="7" ref="1">
    <original>H</original>
    <variation>Y</variation>
    <location>
        <position position="642"/>
    </location>
</feature>
<feature type="sequence conflict" description="In Ref. 1; CAA65884." evidence="7" ref="1">
    <original>G</original>
    <variation>A</variation>
    <location>
        <position position="658"/>
    </location>
</feature>
<feature type="helix" evidence="8">
    <location>
        <begin position="65"/>
        <end position="74"/>
    </location>
</feature>
<feature type="turn" evidence="10">
    <location>
        <begin position="78"/>
        <end position="80"/>
    </location>
</feature>
<feature type="helix" evidence="8">
    <location>
        <begin position="84"/>
        <end position="101"/>
    </location>
</feature>
<feature type="helix" evidence="8">
    <location>
        <begin position="106"/>
        <end position="116"/>
    </location>
</feature>
<feature type="strand" evidence="8">
    <location>
        <begin position="118"/>
        <end position="121"/>
    </location>
</feature>
<feature type="helix" evidence="8">
    <location>
        <begin position="123"/>
        <end position="131"/>
    </location>
</feature>
<feature type="strand" evidence="8">
    <location>
        <begin position="135"/>
        <end position="137"/>
    </location>
</feature>
<feature type="helix" evidence="8">
    <location>
        <begin position="141"/>
        <end position="153"/>
    </location>
</feature>
<feature type="helix" evidence="8">
    <location>
        <begin position="158"/>
        <end position="170"/>
    </location>
</feature>
<feature type="helix" evidence="8">
    <location>
        <begin position="172"/>
        <end position="174"/>
    </location>
</feature>
<feature type="helix" evidence="8">
    <location>
        <begin position="179"/>
        <end position="182"/>
    </location>
</feature>
<feature type="helix" evidence="8">
    <location>
        <begin position="185"/>
        <end position="189"/>
    </location>
</feature>
<feature type="helix" evidence="8">
    <location>
        <begin position="190"/>
        <end position="192"/>
    </location>
</feature>
<feature type="turn" evidence="8">
    <location>
        <begin position="195"/>
        <end position="197"/>
    </location>
</feature>
<feature type="helix" evidence="8">
    <location>
        <begin position="198"/>
        <end position="208"/>
    </location>
</feature>
<feature type="helix" evidence="8">
    <location>
        <begin position="211"/>
        <end position="213"/>
    </location>
</feature>
<feature type="helix" evidence="8">
    <location>
        <begin position="216"/>
        <end position="229"/>
    </location>
</feature>
<feature type="helix" evidence="8">
    <location>
        <begin position="233"/>
        <end position="245"/>
    </location>
</feature>
<feature type="turn" evidence="8">
    <location>
        <begin position="247"/>
        <end position="249"/>
    </location>
</feature>
<feature type="helix" evidence="8">
    <location>
        <begin position="272"/>
        <end position="280"/>
    </location>
</feature>
<feature type="turn" evidence="9">
    <location>
        <begin position="318"/>
        <end position="321"/>
    </location>
</feature>
<feature type="helix" evidence="9">
    <location>
        <begin position="329"/>
        <end position="332"/>
    </location>
</feature>
<feature type="helix" evidence="9">
    <location>
        <begin position="347"/>
        <end position="352"/>
    </location>
</feature>
<feature type="strand" evidence="9">
    <location>
        <begin position="354"/>
        <end position="356"/>
    </location>
</feature>
<feature type="helix" evidence="9">
    <location>
        <begin position="363"/>
        <end position="368"/>
    </location>
</feature>
<feature type="helix" evidence="9">
    <location>
        <begin position="370"/>
        <end position="376"/>
    </location>
</feature>
<feature type="helix" evidence="9">
    <location>
        <begin position="382"/>
        <end position="399"/>
    </location>
</feature>
<feature type="strand" evidence="9">
    <location>
        <begin position="401"/>
        <end position="405"/>
    </location>
</feature>
<feature type="strand" evidence="10">
    <location>
        <begin position="407"/>
        <end position="409"/>
    </location>
</feature>
<feature type="helix" evidence="9">
    <location>
        <begin position="412"/>
        <end position="426"/>
    </location>
</feature>
<feature type="helix" evidence="9">
    <location>
        <begin position="427"/>
        <end position="429"/>
    </location>
</feature>
<feature type="helix" evidence="9">
    <location>
        <begin position="433"/>
        <end position="442"/>
    </location>
</feature>
<feature type="strand" evidence="9">
    <location>
        <begin position="448"/>
        <end position="451"/>
    </location>
</feature>
<feature type="helix" evidence="9">
    <location>
        <begin position="452"/>
        <end position="460"/>
    </location>
</feature>
<feature type="helix" evidence="9">
    <location>
        <begin position="467"/>
        <end position="482"/>
    </location>
</feature>
<feature type="helix" evidence="9">
    <location>
        <begin position="487"/>
        <end position="509"/>
    </location>
</feature>
<feature type="helix" evidence="9">
    <location>
        <begin position="511"/>
        <end position="513"/>
    </location>
</feature>
<feature type="helix" evidence="9">
    <location>
        <begin position="526"/>
        <end position="550"/>
    </location>
</feature>
<feature type="helix" evidence="9">
    <location>
        <begin position="555"/>
        <end position="568"/>
    </location>
</feature>
<feature type="helix" evidence="9">
    <location>
        <begin position="571"/>
        <end position="574"/>
    </location>
</feature>
<feature type="helix" evidence="9">
    <location>
        <begin position="585"/>
        <end position="592"/>
    </location>
</feature>
<feature type="helix" evidence="9">
    <location>
        <begin position="597"/>
        <end position="624"/>
    </location>
</feature>
<feature type="helix" evidence="9">
    <location>
        <begin position="634"/>
        <end position="651"/>
    </location>
</feature>
<feature type="strand" evidence="9">
    <location>
        <begin position="658"/>
        <end position="660"/>
    </location>
</feature>
<feature type="helix" evidence="9">
    <location>
        <begin position="665"/>
        <end position="671"/>
    </location>
</feature>
<feature type="strand" evidence="9">
    <location>
        <begin position="679"/>
        <end position="681"/>
    </location>
</feature>
<feature type="turn" evidence="9">
    <location>
        <begin position="682"/>
        <end position="684"/>
    </location>
</feature>
<feature type="turn" evidence="9">
    <location>
        <begin position="686"/>
        <end position="688"/>
    </location>
</feature>
<feature type="helix" evidence="9">
    <location>
        <begin position="689"/>
        <end position="696"/>
    </location>
</feature>
<feature type="helix" evidence="9">
    <location>
        <begin position="720"/>
        <end position="726"/>
    </location>
</feature>
<feature type="helix" evidence="9">
    <location>
        <begin position="729"/>
        <end position="739"/>
    </location>
</feature>
<dbReference type="EMBL" id="X97249">
    <property type="protein sequence ID" value="CAA65884.1"/>
    <property type="molecule type" value="mRNA"/>
</dbReference>
<dbReference type="EMBL" id="AL109963">
    <property type="status" value="NOT_ANNOTATED_CDS"/>
    <property type="molecule type" value="Genomic_DNA"/>
</dbReference>
<dbReference type="EMBL" id="BC012462">
    <property type="protein sequence ID" value="AAH12462.1"/>
    <property type="molecule type" value="mRNA"/>
</dbReference>
<dbReference type="CCDS" id="CCDS14479.1">
    <molecule id="Q92674-1"/>
</dbReference>
<dbReference type="CCDS" id="CCDS83482.1">
    <molecule id="Q92674-2"/>
</dbReference>
<dbReference type="RefSeq" id="NP_001305452.1">
    <molecule id="Q92674-2"/>
    <property type="nucleotide sequence ID" value="NM_001318523.1"/>
</dbReference>
<dbReference type="RefSeq" id="NP_001373117.1">
    <molecule id="Q92674-1"/>
    <property type="nucleotide sequence ID" value="NM_001386188.2"/>
</dbReference>
<dbReference type="RefSeq" id="NP_006724.2">
    <molecule id="Q92674-1"/>
    <property type="nucleotide sequence ID" value="NM_006733.3"/>
</dbReference>
<dbReference type="RefSeq" id="XP_005262168.1">
    <molecule id="Q92674-1"/>
    <property type="nucleotide sequence ID" value="XM_005262111.3"/>
</dbReference>
<dbReference type="RefSeq" id="XP_011529196.1">
    <property type="nucleotide sequence ID" value="XM_011530894.2"/>
</dbReference>
<dbReference type="RefSeq" id="XP_011529197.1">
    <molecule id="Q92674-1"/>
    <property type="nucleotide sequence ID" value="XM_011530895.3"/>
</dbReference>
<dbReference type="RefSeq" id="XP_011529199.1">
    <property type="nucleotide sequence ID" value="XM_011530897.2"/>
</dbReference>
<dbReference type="RefSeq" id="XP_011529201.1">
    <property type="nucleotide sequence ID" value="XM_011530899.2"/>
</dbReference>
<dbReference type="RefSeq" id="XP_047297903.1">
    <molecule id="Q92674-1"/>
    <property type="nucleotide sequence ID" value="XM_047441947.1"/>
</dbReference>
<dbReference type="RefSeq" id="XP_047297904.1">
    <molecule id="Q92674-1"/>
    <property type="nucleotide sequence ID" value="XM_047441948.1"/>
</dbReference>
<dbReference type="RefSeq" id="XP_047297905.1">
    <molecule id="Q92674-1"/>
    <property type="nucleotide sequence ID" value="XM_047441949.1"/>
</dbReference>
<dbReference type="RefSeq" id="XP_047297906.1">
    <molecule id="Q92674-1"/>
    <property type="nucleotide sequence ID" value="XM_047441950.1"/>
</dbReference>
<dbReference type="RefSeq" id="XP_047297907.1">
    <molecule id="Q92674-1"/>
    <property type="nucleotide sequence ID" value="XM_047441951.1"/>
</dbReference>
<dbReference type="RefSeq" id="XP_054182715.1">
    <molecule id="Q92674-1"/>
    <property type="nucleotide sequence ID" value="XM_054326740.1"/>
</dbReference>
<dbReference type="RefSeq" id="XP_054182716.1">
    <molecule id="Q92674-1"/>
    <property type="nucleotide sequence ID" value="XM_054326741.1"/>
</dbReference>
<dbReference type="RefSeq" id="XP_054182717.1">
    <molecule id="Q92674-1"/>
    <property type="nucleotide sequence ID" value="XM_054326742.1"/>
</dbReference>
<dbReference type="RefSeq" id="XP_054182718.1">
    <molecule id="Q92674-1"/>
    <property type="nucleotide sequence ID" value="XM_054326743.1"/>
</dbReference>
<dbReference type="RefSeq" id="XP_054182719.1">
    <molecule id="Q92674-1"/>
    <property type="nucleotide sequence ID" value="XM_054326744.1"/>
</dbReference>
<dbReference type="RefSeq" id="XP_054182720.1">
    <molecule id="Q92674-1"/>
    <property type="nucleotide sequence ID" value="XM_054326745.1"/>
</dbReference>
<dbReference type="PDB" id="7PB4">
    <property type="method" value="X-ray"/>
    <property type="resolution" value="2.49 A"/>
    <property type="chains" value="I=64-281"/>
</dbReference>
<dbReference type="PDB" id="7PKN">
    <property type="method" value="EM"/>
    <property type="resolution" value="3.20 A"/>
    <property type="chains" value="I=1-756"/>
</dbReference>
<dbReference type="PDB" id="7QOO">
    <property type="method" value="EM"/>
    <property type="resolution" value="4.60 A"/>
    <property type="chains" value="I=1-756"/>
</dbReference>
<dbReference type="PDB" id="7R5S">
    <property type="method" value="EM"/>
    <property type="resolution" value="2.83 A"/>
    <property type="chains" value="I=1-756"/>
</dbReference>
<dbReference type="PDB" id="7R5V">
    <property type="method" value="EM"/>
    <property type="resolution" value="4.55 A"/>
    <property type="chains" value="I=1-756"/>
</dbReference>
<dbReference type="PDB" id="7XHN">
    <property type="method" value="EM"/>
    <property type="resolution" value="3.71 A"/>
    <property type="chains" value="I=1-756"/>
</dbReference>
<dbReference type="PDB" id="7XHO">
    <property type="method" value="EM"/>
    <property type="resolution" value="3.29 A"/>
    <property type="chains" value="I=1-756"/>
</dbReference>
<dbReference type="PDB" id="7YWX">
    <property type="method" value="EM"/>
    <property type="resolution" value="12.00 A"/>
    <property type="chains" value="I=1-756"/>
</dbReference>
<dbReference type="PDB" id="7YYH">
    <property type="method" value="EM"/>
    <property type="resolution" value="8.90 A"/>
    <property type="chains" value="I=1-756"/>
</dbReference>
<dbReference type="PDBsum" id="7PB4"/>
<dbReference type="PDBsum" id="7PKN"/>
<dbReference type="PDBsum" id="7QOO"/>
<dbReference type="PDBsum" id="7R5S"/>
<dbReference type="PDBsum" id="7R5V"/>
<dbReference type="PDBsum" id="7XHN"/>
<dbReference type="PDBsum" id="7XHO"/>
<dbReference type="PDBsum" id="7YWX"/>
<dbReference type="PDBsum" id="7YYH"/>
<dbReference type="EMDB" id="EMD-13473"/>
<dbReference type="EMDB" id="EMD-14098"/>
<dbReference type="EMDB" id="EMD-14336"/>
<dbReference type="EMDB" id="EMD-14341"/>
<dbReference type="EMDB" id="EMD-14351"/>
<dbReference type="EMDB" id="EMD-14375"/>
<dbReference type="EMDB" id="EMD-33196"/>
<dbReference type="EMDB" id="EMD-33197"/>
<dbReference type="SMR" id="Q92674"/>
<dbReference type="BioGRID" id="108769">
    <property type="interactions" value="38"/>
</dbReference>
<dbReference type="ComplexPortal" id="CPX-5646">
    <property type="entry name" value="Kinetochore CCAN complex"/>
</dbReference>
<dbReference type="CORUM" id="Q92674"/>
<dbReference type="FunCoup" id="Q92674">
    <property type="interactions" value="1287"/>
</dbReference>
<dbReference type="IntAct" id="Q92674">
    <property type="interactions" value="26"/>
</dbReference>
<dbReference type="MINT" id="Q92674"/>
<dbReference type="STRING" id="9606.ENSP00000362018"/>
<dbReference type="GlyGen" id="Q92674">
    <property type="glycosylation" value="1 site, 1 O-linked glycan (1 site)"/>
</dbReference>
<dbReference type="iPTMnet" id="Q92674"/>
<dbReference type="PhosphoSitePlus" id="Q92674"/>
<dbReference type="SwissPalm" id="Q92674"/>
<dbReference type="BioMuta" id="CENPI"/>
<dbReference type="DMDM" id="77416860"/>
<dbReference type="jPOST" id="Q92674"/>
<dbReference type="MassIVE" id="Q92674"/>
<dbReference type="PaxDb" id="9606-ENSP00000362018"/>
<dbReference type="PeptideAtlas" id="Q92674"/>
<dbReference type="ProteomicsDB" id="75403">
    <molecule id="Q92674-1"/>
</dbReference>
<dbReference type="ProteomicsDB" id="75404">
    <molecule id="Q92674-2"/>
</dbReference>
<dbReference type="Pumba" id="Q92674"/>
<dbReference type="Antibodypedia" id="28595">
    <property type="antibodies" value="155 antibodies from 27 providers"/>
</dbReference>
<dbReference type="DNASU" id="2491"/>
<dbReference type="Ensembl" id="ENST00000372926.5">
    <molecule id="Q92674-2"/>
    <property type="protein sequence ID" value="ENSP00000362017.1"/>
    <property type="gene ID" value="ENSG00000102384.14"/>
</dbReference>
<dbReference type="Ensembl" id="ENST00000372927.5">
    <molecule id="Q92674-1"/>
    <property type="protein sequence ID" value="ENSP00000362018.1"/>
    <property type="gene ID" value="ENSG00000102384.14"/>
</dbReference>
<dbReference type="Ensembl" id="ENST00000682095.1">
    <molecule id="Q92674-1"/>
    <property type="protein sequence ID" value="ENSP00000507927.1"/>
    <property type="gene ID" value="ENSG00000102384.14"/>
</dbReference>
<dbReference type="Ensembl" id="ENST00000684367.1">
    <molecule id="Q92674-1"/>
    <property type="protein sequence ID" value="ENSP00000507595.1"/>
    <property type="gene ID" value="ENSG00000102384.14"/>
</dbReference>
<dbReference type="GeneID" id="2491"/>
<dbReference type="KEGG" id="hsa:2491"/>
<dbReference type="MANE-Select" id="ENST00000682095.1">
    <property type="protein sequence ID" value="ENSP00000507927.1"/>
    <property type="RefSeq nucleotide sequence ID" value="NM_001386188.2"/>
    <property type="RefSeq protein sequence ID" value="NP_001373117.1"/>
</dbReference>
<dbReference type="UCSC" id="uc004egy.4">
    <molecule id="Q92674-1"/>
    <property type="organism name" value="human"/>
</dbReference>
<dbReference type="AGR" id="HGNC:3968"/>
<dbReference type="CTD" id="2491"/>
<dbReference type="DisGeNET" id="2491"/>
<dbReference type="GeneCards" id="CENPI"/>
<dbReference type="HGNC" id="HGNC:3968">
    <property type="gene designation" value="CENPI"/>
</dbReference>
<dbReference type="HPA" id="ENSG00000102384">
    <property type="expression patterns" value="Tissue enhanced (bone marrow, lymphoid tissue)"/>
</dbReference>
<dbReference type="MIM" id="300065">
    <property type="type" value="gene"/>
</dbReference>
<dbReference type="neXtProt" id="NX_Q92674"/>
<dbReference type="OpenTargets" id="ENSG00000102384"/>
<dbReference type="PharmGKB" id="PA28385"/>
<dbReference type="VEuPathDB" id="HostDB:ENSG00000102384"/>
<dbReference type="eggNOG" id="ENOG502QU9H">
    <property type="taxonomic scope" value="Eukaryota"/>
</dbReference>
<dbReference type="GeneTree" id="ENSGT00390000013235"/>
<dbReference type="HOGENOM" id="CLU_022189_0_0_1"/>
<dbReference type="InParanoid" id="Q92674"/>
<dbReference type="OMA" id="RVFKNYY"/>
<dbReference type="OrthoDB" id="6347512at2759"/>
<dbReference type="PAN-GO" id="Q92674">
    <property type="GO annotations" value="3 GO annotations based on evolutionary models"/>
</dbReference>
<dbReference type="PhylomeDB" id="Q92674"/>
<dbReference type="TreeFam" id="TF101137"/>
<dbReference type="PathwayCommons" id="Q92674"/>
<dbReference type="Reactome" id="R-HSA-141444">
    <property type="pathway name" value="Amplification of signal from unattached kinetochores via a MAD2 inhibitory signal"/>
</dbReference>
<dbReference type="Reactome" id="R-HSA-2467813">
    <property type="pathway name" value="Separation of Sister Chromatids"/>
</dbReference>
<dbReference type="Reactome" id="R-HSA-2500257">
    <property type="pathway name" value="Resolution of Sister Chromatid Cohesion"/>
</dbReference>
<dbReference type="Reactome" id="R-HSA-5663220">
    <property type="pathway name" value="RHO GTPases Activate Formins"/>
</dbReference>
<dbReference type="Reactome" id="R-HSA-606279">
    <property type="pathway name" value="Deposition of new CENPA-containing nucleosomes at the centromere"/>
</dbReference>
<dbReference type="Reactome" id="R-HSA-68877">
    <property type="pathway name" value="Mitotic Prometaphase"/>
</dbReference>
<dbReference type="Reactome" id="R-HSA-9648025">
    <property type="pathway name" value="EML4 and NUDC in mitotic spindle formation"/>
</dbReference>
<dbReference type="SignaLink" id="Q92674"/>
<dbReference type="SIGNOR" id="Q92674"/>
<dbReference type="BioGRID-ORCS" id="2491">
    <property type="hits" value="322 hits in 799 CRISPR screens"/>
</dbReference>
<dbReference type="ChiTaRS" id="CENPI">
    <property type="organism name" value="human"/>
</dbReference>
<dbReference type="GeneWiki" id="CENPI"/>
<dbReference type="GenomeRNAi" id="2491"/>
<dbReference type="Pharos" id="Q92674">
    <property type="development level" value="Tbio"/>
</dbReference>
<dbReference type="PRO" id="PR:Q92674"/>
<dbReference type="Proteomes" id="UP000005640">
    <property type="component" value="Chromosome X"/>
</dbReference>
<dbReference type="RNAct" id="Q92674">
    <property type="molecule type" value="protein"/>
</dbReference>
<dbReference type="Bgee" id="ENSG00000102384">
    <property type="expression patterns" value="Expressed in secondary oocyte and 131 other cell types or tissues"/>
</dbReference>
<dbReference type="ExpressionAtlas" id="Q92674">
    <property type="expression patterns" value="baseline and differential"/>
</dbReference>
<dbReference type="GO" id="GO:0005829">
    <property type="term" value="C:cytosol"/>
    <property type="evidence" value="ECO:0000304"/>
    <property type="project" value="Reactome"/>
</dbReference>
<dbReference type="GO" id="GO:0000939">
    <property type="term" value="C:inner kinetochore"/>
    <property type="evidence" value="ECO:0000353"/>
    <property type="project" value="ComplexPortal"/>
</dbReference>
<dbReference type="GO" id="GO:0000776">
    <property type="term" value="C:kinetochore"/>
    <property type="evidence" value="ECO:0000314"/>
    <property type="project" value="UniProtKB"/>
</dbReference>
<dbReference type="GO" id="GO:0016604">
    <property type="term" value="C:nuclear body"/>
    <property type="evidence" value="ECO:0000314"/>
    <property type="project" value="HPA"/>
</dbReference>
<dbReference type="GO" id="GO:0005654">
    <property type="term" value="C:nucleoplasm"/>
    <property type="evidence" value="ECO:0000314"/>
    <property type="project" value="HPA"/>
</dbReference>
<dbReference type="GO" id="GO:0005634">
    <property type="term" value="C:nucleus"/>
    <property type="evidence" value="ECO:0000303"/>
    <property type="project" value="ComplexPortal"/>
</dbReference>
<dbReference type="GO" id="GO:0034080">
    <property type="term" value="P:CENP-A containing chromatin assembly"/>
    <property type="evidence" value="ECO:0000318"/>
    <property type="project" value="GO_Central"/>
</dbReference>
<dbReference type="GO" id="GO:0007059">
    <property type="term" value="P:chromosome segregation"/>
    <property type="evidence" value="ECO:0000303"/>
    <property type="project" value="ComplexPortal"/>
</dbReference>
<dbReference type="GO" id="GO:0000070">
    <property type="term" value="P:mitotic sister chromatid segregation"/>
    <property type="evidence" value="ECO:0000318"/>
    <property type="project" value="GO_Central"/>
</dbReference>
<dbReference type="GO" id="GO:0007548">
    <property type="term" value="P:sex differentiation"/>
    <property type="evidence" value="ECO:0000304"/>
    <property type="project" value="ProtInc"/>
</dbReference>
<dbReference type="InterPro" id="IPR012485">
    <property type="entry name" value="CENP-I"/>
</dbReference>
<dbReference type="PANTHER" id="PTHR48208">
    <property type="entry name" value="CENTROMERE PROTEIN I"/>
    <property type="match status" value="1"/>
</dbReference>
<dbReference type="PANTHER" id="PTHR48208:SF2">
    <property type="entry name" value="CENTROMERE PROTEIN I"/>
    <property type="match status" value="1"/>
</dbReference>
<dbReference type="Pfam" id="PF07778">
    <property type="entry name" value="CENP-I"/>
    <property type="match status" value="1"/>
</dbReference>
<protein>
    <recommendedName>
        <fullName>Centromere protein I</fullName>
        <shortName>CENP-I</shortName>
    </recommendedName>
    <alternativeName>
        <fullName>FSH primary response protein 1</fullName>
    </alternativeName>
    <alternativeName>
        <fullName>Follicle-stimulating hormone primary response protein</fullName>
    </alternativeName>
    <alternativeName>
        <fullName>Interphase centromere complex protein 19</fullName>
    </alternativeName>
    <alternativeName>
        <fullName>Leucine-rich primary response protein 1</fullName>
    </alternativeName>
</protein>
<comment type="function">
    <text evidence="2 4">Component of the CENPA-CAD (nucleosome distal) complex, a complex recruited to centromeres which is involved in assembly of kinetochore proteins, mitotic progression and chromosome segregation. May be involved in incorporation of newly synthesized CENPA into centromeres via its interaction with the CENPA-NAC complex. Required for the localization of CENPF, MAD1L1 and MAD2 (MAD2L1 or MAD2L2) to kinetochores. Involved in the response of gonadal tissues to follicle-stimulating hormone.</text>
</comment>
<comment type="subunit">
    <text evidence="3 4 5">Component of the CENPA-CAD complex, composed of CENPI, CENPK, CENPL, CENPO, CENPP, CENPQ, CENPR and CENPS. The CENPA-CAD complex interacts with the CENPA-NAC complex, at least composed of CENPA, CENPC, CENPH, CENPM, CENPN, CENPT and CENPU. Interacts with SENP6.</text>
</comment>
<comment type="interaction">
    <interactant intactId="EBI-11085153">
        <id>Q92674</id>
    </interactant>
    <interactant intactId="EBI-6871750">
        <id>Q9BS16</id>
        <label>CENPK</label>
    </interactant>
    <organismsDiffer>false</organismsDiffer>
    <experiments>2</experiments>
</comment>
<comment type="interaction">
    <interactant intactId="EBI-11085153">
        <id>Q92674</id>
    </interactant>
    <interactant intactId="EBI-742887">
        <id>Q8TAP6</id>
        <label>CEP76</label>
    </interactant>
    <organismsDiffer>false</organismsDiffer>
    <experiments>3</experiments>
</comment>
<comment type="subcellular location">
    <subcellularLocation>
        <location>Nucleus</location>
    </subcellularLocation>
    <subcellularLocation>
        <location>Chromosome</location>
        <location>Centromere</location>
    </subcellularLocation>
    <text>Localizes exclusively in the centromeres. The CENPA-CAD complex is probably recruited on centromeres by the CENPA-NAC complex.</text>
</comment>
<comment type="alternative products">
    <event type="alternative splicing"/>
    <isoform>
        <id>Q92674-1</id>
        <name>1</name>
        <sequence type="displayed"/>
    </isoform>
    <isoform>
        <id>Q92674-2</id>
        <name>2</name>
        <sequence type="described" ref="VSP_015797"/>
    </isoform>
</comment>
<comment type="induction">
    <text>By follicle-stimulating hormone (FSH).</text>
</comment>
<comment type="PTM">
    <text evidence="5">Sumoylated. Sumoylated form can be polyubiquitinated by RNF4, leading to its degradation. Desumoylation by SENP6 prevents its degradation.</text>
</comment>
<comment type="similarity">
    <text evidence="7">Belongs to the CENP-I/CTF3 family.</text>
</comment>
<accession>Q92674</accession>
<accession>Q5JWZ9</accession>
<accession>Q96ED0</accession>
<evidence type="ECO:0000256" key="1">
    <source>
        <dbReference type="SAM" id="MobiDB-lite"/>
    </source>
</evidence>
<evidence type="ECO:0000269" key="2">
    <source>
    </source>
</evidence>
<evidence type="ECO:0000269" key="3">
    <source>
    </source>
</evidence>
<evidence type="ECO:0000269" key="4">
    <source>
    </source>
</evidence>
<evidence type="ECO:0000269" key="5">
    <source>
    </source>
</evidence>
<evidence type="ECO:0000303" key="6">
    <source>
    </source>
</evidence>
<evidence type="ECO:0000305" key="7"/>
<evidence type="ECO:0007829" key="8">
    <source>
        <dbReference type="PDB" id="7PB4"/>
    </source>
</evidence>
<evidence type="ECO:0007829" key="9">
    <source>
        <dbReference type="PDB" id="7R5S"/>
    </source>
</evidence>
<evidence type="ECO:0007829" key="10">
    <source>
        <dbReference type="PDB" id="7XHO"/>
    </source>
</evidence>
<gene>
    <name type="primary">CENPI</name>
    <name type="synonym">FSHPRH1</name>
    <name type="synonym">ICEN19</name>
    <name type="synonym">LRPR1</name>
</gene>
<organism>
    <name type="scientific">Homo sapiens</name>
    <name type="common">Human</name>
    <dbReference type="NCBI Taxonomy" id="9606"/>
    <lineage>
        <taxon>Eukaryota</taxon>
        <taxon>Metazoa</taxon>
        <taxon>Chordata</taxon>
        <taxon>Craniata</taxon>
        <taxon>Vertebrata</taxon>
        <taxon>Euteleostomi</taxon>
        <taxon>Mammalia</taxon>
        <taxon>Eutheria</taxon>
        <taxon>Euarchontoglires</taxon>
        <taxon>Primates</taxon>
        <taxon>Haplorrhini</taxon>
        <taxon>Catarrhini</taxon>
        <taxon>Hominidae</taxon>
        <taxon>Homo</taxon>
    </lineage>
</organism>